<feature type="chain" id="PRO_1000201214" description="3-hydroxydecanoyl-[acyl-carrier-protein] dehydratase">
    <location>
        <begin position="1"/>
        <end position="171"/>
    </location>
</feature>
<feature type="active site" evidence="1">
    <location>
        <position position="70"/>
    </location>
</feature>
<proteinExistence type="inferred from homology"/>
<keyword id="KW-0963">Cytoplasm</keyword>
<keyword id="KW-0275">Fatty acid biosynthesis</keyword>
<keyword id="KW-0276">Fatty acid metabolism</keyword>
<keyword id="KW-0413">Isomerase</keyword>
<keyword id="KW-0444">Lipid biosynthesis</keyword>
<keyword id="KW-0443">Lipid metabolism</keyword>
<keyword id="KW-0456">Lyase</keyword>
<keyword id="KW-1185">Reference proteome</keyword>
<evidence type="ECO:0000255" key="1">
    <source>
        <dbReference type="HAMAP-Rule" id="MF_00405"/>
    </source>
</evidence>
<accession>A8H3Y6</accession>
<comment type="function">
    <text evidence="1">Necessary for the introduction of cis unsaturation into fatty acids. Catalyzes the dehydration of (3R)-3-hydroxydecanoyl-ACP to E-(2)-decenoyl-ACP and then its isomerization to Z-(3)-decenoyl-ACP. Can catalyze the dehydratase reaction for beta-hydroxyacyl-ACPs with saturated chain lengths up to 16:0, being most active on intermediate chain length.</text>
</comment>
<comment type="catalytic activity">
    <reaction evidence="1">
        <text>a (3R)-hydroxyacyl-[ACP] = a (2E)-enoyl-[ACP] + H2O</text>
        <dbReference type="Rhea" id="RHEA:13097"/>
        <dbReference type="Rhea" id="RHEA-COMP:9925"/>
        <dbReference type="Rhea" id="RHEA-COMP:9945"/>
        <dbReference type="ChEBI" id="CHEBI:15377"/>
        <dbReference type="ChEBI" id="CHEBI:78784"/>
        <dbReference type="ChEBI" id="CHEBI:78827"/>
        <dbReference type="EC" id="4.2.1.59"/>
    </reaction>
</comment>
<comment type="catalytic activity">
    <reaction evidence="1">
        <text>(3R)-hydroxydecanoyl-[ACP] = (2E)-decenoyl-[ACP] + H2O</text>
        <dbReference type="Rhea" id="RHEA:41860"/>
        <dbReference type="Rhea" id="RHEA-COMP:9638"/>
        <dbReference type="Rhea" id="RHEA-COMP:9639"/>
        <dbReference type="ChEBI" id="CHEBI:15377"/>
        <dbReference type="ChEBI" id="CHEBI:78466"/>
        <dbReference type="ChEBI" id="CHEBI:78467"/>
    </reaction>
</comment>
<comment type="catalytic activity">
    <reaction evidence="1">
        <text>(2E)-decenoyl-[ACP] = (3Z)-decenoyl-[ACP]</text>
        <dbReference type="Rhea" id="RHEA:23568"/>
        <dbReference type="Rhea" id="RHEA-COMP:9639"/>
        <dbReference type="Rhea" id="RHEA-COMP:9927"/>
        <dbReference type="ChEBI" id="CHEBI:78467"/>
        <dbReference type="ChEBI" id="CHEBI:78798"/>
        <dbReference type="EC" id="5.3.3.14"/>
    </reaction>
</comment>
<comment type="pathway">
    <text evidence="1">Lipid metabolism; fatty acid biosynthesis.</text>
</comment>
<comment type="subunit">
    <text evidence="1">Homodimer.</text>
</comment>
<comment type="subcellular location">
    <subcellularLocation>
        <location evidence="1">Cytoplasm</location>
    </subcellularLocation>
</comment>
<comment type="similarity">
    <text evidence="1">Belongs to the thioester dehydratase family. FabA subfamily.</text>
</comment>
<sequence>MSNANSFTKEDLIACGLGKLFGPNSPRLPKDNMLMIDRVLKINADGGEYGKGEIVAELDINPDLWFFDCHFATDPVMPGCLGLDAMWQLVGFFLGWEGAEGKGRALGVGEVKFTGQVLPEAKKVTYKLTIKRKVYRKLVMGIADATMEVDGREIYSAKDLKVGIFTDTTSF</sequence>
<protein>
    <recommendedName>
        <fullName evidence="1">3-hydroxydecanoyl-[acyl-carrier-protein] dehydratase</fullName>
        <ecNumber evidence="1">4.2.1.59</ecNumber>
    </recommendedName>
    <alternativeName>
        <fullName evidence="1">3-hydroxyacyl-[acyl-carrier-protein] dehydratase FabA</fullName>
    </alternativeName>
    <alternativeName>
        <fullName evidence="1">Beta-hydroxydecanoyl thioester dehydrase</fullName>
    </alternativeName>
    <alternativeName>
        <fullName evidence="1">Trans-2-decenoyl-[acyl-carrier-protein] isomerase</fullName>
        <ecNumber evidence="1">5.3.3.14</ecNumber>
    </alternativeName>
</protein>
<dbReference type="EC" id="4.2.1.59" evidence="1"/>
<dbReference type="EC" id="5.3.3.14" evidence="1"/>
<dbReference type="EMBL" id="CP000851">
    <property type="protein sequence ID" value="ABV87273.1"/>
    <property type="molecule type" value="Genomic_DNA"/>
</dbReference>
<dbReference type="RefSeq" id="WP_012155191.1">
    <property type="nucleotide sequence ID" value="NC_009901.1"/>
</dbReference>
<dbReference type="SMR" id="A8H3Y6"/>
<dbReference type="STRING" id="398579.Spea_1951"/>
<dbReference type="KEGG" id="spl:Spea_1951"/>
<dbReference type="eggNOG" id="COG0764">
    <property type="taxonomic scope" value="Bacteria"/>
</dbReference>
<dbReference type="HOGENOM" id="CLU_097925_0_0_6"/>
<dbReference type="OrthoDB" id="9786735at2"/>
<dbReference type="UniPathway" id="UPA00094"/>
<dbReference type="Proteomes" id="UP000002608">
    <property type="component" value="Chromosome"/>
</dbReference>
<dbReference type="GO" id="GO:0005737">
    <property type="term" value="C:cytoplasm"/>
    <property type="evidence" value="ECO:0007669"/>
    <property type="project" value="UniProtKB-SubCell"/>
</dbReference>
<dbReference type="GO" id="GO:0019171">
    <property type="term" value="F:(3R)-hydroxyacyl-[acyl-carrier-protein] dehydratase activity"/>
    <property type="evidence" value="ECO:0007669"/>
    <property type="project" value="UniProtKB-UniRule"/>
</dbReference>
<dbReference type="GO" id="GO:0034017">
    <property type="term" value="F:trans-2-decenoyl-acyl-carrier-protein isomerase activity"/>
    <property type="evidence" value="ECO:0007669"/>
    <property type="project" value="UniProtKB-UniRule"/>
</dbReference>
<dbReference type="GO" id="GO:0006636">
    <property type="term" value="P:unsaturated fatty acid biosynthetic process"/>
    <property type="evidence" value="ECO:0007669"/>
    <property type="project" value="UniProtKB-UniRule"/>
</dbReference>
<dbReference type="CDD" id="cd01287">
    <property type="entry name" value="FabA"/>
    <property type="match status" value="1"/>
</dbReference>
<dbReference type="Gene3D" id="3.10.129.10">
    <property type="entry name" value="Hotdog Thioesterase"/>
    <property type="match status" value="1"/>
</dbReference>
<dbReference type="HAMAP" id="MF_00405">
    <property type="entry name" value="FabA"/>
    <property type="match status" value="1"/>
</dbReference>
<dbReference type="InterPro" id="IPR010083">
    <property type="entry name" value="FabA"/>
</dbReference>
<dbReference type="InterPro" id="IPR013114">
    <property type="entry name" value="FabA_FabZ"/>
</dbReference>
<dbReference type="InterPro" id="IPR029069">
    <property type="entry name" value="HotDog_dom_sf"/>
</dbReference>
<dbReference type="NCBIfam" id="TIGR01749">
    <property type="entry name" value="fabA"/>
    <property type="match status" value="1"/>
</dbReference>
<dbReference type="NCBIfam" id="NF003509">
    <property type="entry name" value="PRK05174.1"/>
    <property type="match status" value="1"/>
</dbReference>
<dbReference type="PANTHER" id="PTHR30272">
    <property type="entry name" value="3-HYDROXYACYL-[ACYL-CARRIER-PROTEIN] DEHYDRATASE"/>
    <property type="match status" value="1"/>
</dbReference>
<dbReference type="PANTHER" id="PTHR30272:SF8">
    <property type="entry name" value="3-HYDROXYDECANOYL-[ACYL-CARRIER-PROTEIN] DEHYDRATASE"/>
    <property type="match status" value="1"/>
</dbReference>
<dbReference type="Pfam" id="PF07977">
    <property type="entry name" value="FabA"/>
    <property type="match status" value="1"/>
</dbReference>
<dbReference type="SUPFAM" id="SSF54637">
    <property type="entry name" value="Thioesterase/thiol ester dehydrase-isomerase"/>
    <property type="match status" value="1"/>
</dbReference>
<gene>
    <name evidence="1" type="primary">fabA</name>
    <name type="ordered locus">Spea_1951</name>
</gene>
<reference key="1">
    <citation type="submission" date="2007-10" db="EMBL/GenBank/DDBJ databases">
        <title>Complete sequence of Shewanella pealeana ATCC 700345.</title>
        <authorList>
            <consortium name="US DOE Joint Genome Institute"/>
            <person name="Copeland A."/>
            <person name="Lucas S."/>
            <person name="Lapidus A."/>
            <person name="Barry K."/>
            <person name="Glavina del Rio T."/>
            <person name="Dalin E."/>
            <person name="Tice H."/>
            <person name="Pitluck S."/>
            <person name="Chertkov O."/>
            <person name="Brettin T."/>
            <person name="Bruce D."/>
            <person name="Detter J.C."/>
            <person name="Han C."/>
            <person name="Schmutz J."/>
            <person name="Larimer F."/>
            <person name="Land M."/>
            <person name="Hauser L."/>
            <person name="Kyrpides N."/>
            <person name="Kim E."/>
            <person name="Zhao J.-S.Z."/>
            <person name="Manno D."/>
            <person name="Hawari J."/>
            <person name="Richardson P."/>
        </authorList>
    </citation>
    <scope>NUCLEOTIDE SEQUENCE [LARGE SCALE GENOMIC DNA]</scope>
    <source>
        <strain>ATCC 700345 / ANG-SQ1</strain>
    </source>
</reference>
<organism>
    <name type="scientific">Shewanella pealeana (strain ATCC 700345 / ANG-SQ1)</name>
    <dbReference type="NCBI Taxonomy" id="398579"/>
    <lineage>
        <taxon>Bacteria</taxon>
        <taxon>Pseudomonadati</taxon>
        <taxon>Pseudomonadota</taxon>
        <taxon>Gammaproteobacteria</taxon>
        <taxon>Alteromonadales</taxon>
        <taxon>Shewanellaceae</taxon>
        <taxon>Shewanella</taxon>
    </lineage>
</organism>
<name>FABA_SHEPA</name>